<accession>G7CBF6</accession>
<gene>
    <name evidence="4" type="primary">irtB</name>
    <name evidence="7" type="ORF">KEK_01490</name>
</gene>
<organism>
    <name type="scientific">Mycolicibacterium thermoresistibile (strain ATCC 19527 / DSM 44167 / CIP 105390 / JCM 6362 / NCTC 10409 / 316)</name>
    <name type="common">Mycobacterium thermoresistibile</name>
    <dbReference type="NCBI Taxonomy" id="1078020"/>
    <lineage>
        <taxon>Bacteria</taxon>
        <taxon>Bacillati</taxon>
        <taxon>Actinomycetota</taxon>
        <taxon>Actinomycetes</taxon>
        <taxon>Mycobacteriales</taxon>
        <taxon>Mycobacteriaceae</taxon>
        <taxon>Mycolicibacterium</taxon>
    </lineage>
</organism>
<reference key="1">
    <citation type="submission" date="2011-11" db="EMBL/GenBank/DDBJ databases">
        <authorList>
            <consortium name="Tuberculosis Structural Genomics Consortium"/>
            <person name="Ioerger T.R."/>
        </authorList>
    </citation>
    <scope>NUCLEOTIDE SEQUENCE [LARGE SCALE GENOMIC DNA]</scope>
    <source>
        <strain>ATCC 19527 / DSM 44167 / CIP 105390 / JCM 6362 / NCTC 10409 / 316</strain>
    </source>
</reference>
<reference key="2">
    <citation type="journal article" date="2020" name="Nature">
        <title>The ABC exporter IrtAB imports and reduces mycobacterial siderophores.</title>
        <authorList>
            <person name="Arnold F.M."/>
            <person name="Weber M.S."/>
            <person name="Gonda I."/>
            <person name="Gallenito M.J."/>
            <person name="Adenau S."/>
            <person name="Egloff P."/>
            <person name="Zimmermann I."/>
            <person name="Hutter C.A.J."/>
            <person name="Huerlimann L.M."/>
            <person name="Peters E.E."/>
            <person name="Piel J."/>
            <person name="Meloni G."/>
            <person name="Medalia O."/>
            <person name="Seeger M.A."/>
        </authorList>
    </citation>
    <scope>X-RAY CRYSTALLOGRAPHY (2.7 ANGSTROMS) OF THE IRTAB COMPLEX</scope>
    <scope>FUNCTION</scope>
    <scope>ACTIVITY REGULATION</scope>
    <scope>SUBUNIT</scope>
    <scope>SUBCELLULAR LOCATION</scope>
    <scope>TOPOLOGY</scope>
    <scope>DOMAIN</scope>
</reference>
<sequence>MIRTLLRLVPAEKRGAVAGYAVLTLLSVLLRAVGAVLLIPLLAALFSDTPSDAWLWLGWLTAVTLAGWVTDTNTARLGFDLGFAVLSRTQHDMADRLPNVAMSWFTPDNTATARQAIAATGPELAGLVVNLLTPLIGAALLPAAIGVALLFVSVPLGLAALAGVAVLFGALALSGRLSRAADKVAGETNSAFTERIIEFARTQQALRAARRVEPARSQVGSALAAQHGAGLRLLTMQIPGQVLFSLAGQVALIGFAGMAVWLTVRGQLGVPEAIALIVVLVRYLEPFAAIADLAPALETTRATLNRIQAVLDAPTLPAGRRRLDRTGAAPSIEFDDVRFSYGDEVVLDGVSFTLRPGNTTAIVGPSGSGKTTILSLIAGLQQPASGRVLLDGVDVTTLDPEARRAAVSVVFQHPYLFDGTLRDNVLVGDPEADPDDVTAAMRLARVDELLDRLPDGDATVVGEGGTALSGGERQRVSIARALLKPAPVLLVDEATSALDNANEAAVVDALTADPRPRTRVIVAHRLASIRHADRVLFVEAGRVVEDGAIDELLAAGGRFAQFWAQQQAASEWAIGSTAR</sequence>
<name>IRTB_MYCT3</name>
<keyword id="KW-0002">3D-structure</keyword>
<keyword id="KW-0067">ATP-binding</keyword>
<keyword id="KW-0997">Cell inner membrane</keyword>
<keyword id="KW-1003">Cell membrane</keyword>
<keyword id="KW-0472">Membrane</keyword>
<keyword id="KW-0547">Nucleotide-binding</keyword>
<keyword id="KW-1185">Reference proteome</keyword>
<keyword id="KW-1278">Translocase</keyword>
<keyword id="KW-0812">Transmembrane</keyword>
<keyword id="KW-1133">Transmembrane helix</keyword>
<keyword id="KW-0813">Transport</keyword>
<proteinExistence type="evidence at protein level"/>
<evidence type="ECO:0000255" key="1">
    <source>
        <dbReference type="PROSITE-ProRule" id="PRU00434"/>
    </source>
</evidence>
<evidence type="ECO:0000255" key="2">
    <source>
        <dbReference type="PROSITE-ProRule" id="PRU00441"/>
    </source>
</evidence>
<evidence type="ECO:0000269" key="3">
    <source>
    </source>
</evidence>
<evidence type="ECO:0000303" key="4">
    <source>
    </source>
</evidence>
<evidence type="ECO:0000305" key="5"/>
<evidence type="ECO:0000305" key="6">
    <source>
    </source>
</evidence>
<evidence type="ECO:0000312" key="7">
    <source>
        <dbReference type="EMBL" id="EHI14681.1"/>
    </source>
</evidence>
<evidence type="ECO:0007829" key="8">
    <source>
        <dbReference type="PDB" id="9G2M"/>
    </source>
</evidence>
<evidence type="ECO:0007829" key="9">
    <source>
        <dbReference type="PDB" id="9G2P"/>
    </source>
</evidence>
<evidence type="ECO:0007829" key="10">
    <source>
        <dbReference type="PDB" id="9G2S"/>
    </source>
</evidence>
<evidence type="ECO:0007829" key="11">
    <source>
        <dbReference type="PDB" id="9G2X"/>
    </source>
</evidence>
<evidence type="ECO:0007829" key="12">
    <source>
        <dbReference type="PDB" id="9G36"/>
    </source>
</evidence>
<dbReference type="EC" id="7.2.2.-" evidence="3"/>
<dbReference type="EMBL" id="AGVE01000012">
    <property type="protein sequence ID" value="EHI14681.1"/>
    <property type="molecule type" value="Genomic_DNA"/>
</dbReference>
<dbReference type="RefSeq" id="WP_003923707.1">
    <property type="nucleotide sequence ID" value="NZ_AGVE01000012.1"/>
</dbReference>
<dbReference type="PDB" id="6TEJ">
    <property type="method" value="X-ray"/>
    <property type="resolution" value="2.70 A"/>
    <property type="chains" value="B=2-579"/>
</dbReference>
<dbReference type="PDB" id="9FW3">
    <property type="method" value="EM"/>
    <property type="resolution" value="2.67 A"/>
    <property type="chains" value="B=1-579"/>
</dbReference>
<dbReference type="PDB" id="9FXC">
    <property type="method" value="EM"/>
    <property type="resolution" value="3.60 A"/>
    <property type="chains" value="B=1-579"/>
</dbReference>
<dbReference type="PDB" id="9G2K">
    <property type="method" value="EM"/>
    <property type="resolution" value="3.14 A"/>
    <property type="chains" value="B=1-579"/>
</dbReference>
<dbReference type="PDB" id="9G2L">
    <property type="method" value="EM"/>
    <property type="resolution" value="3.23 A"/>
    <property type="chains" value="B=1-579"/>
</dbReference>
<dbReference type="PDB" id="9G2M">
    <property type="method" value="EM"/>
    <property type="resolution" value="3.23 A"/>
    <property type="chains" value="B=1-579"/>
</dbReference>
<dbReference type="PDB" id="9G2P">
    <property type="method" value="EM"/>
    <property type="resolution" value="2.50 A"/>
    <property type="chains" value="B=1-579"/>
</dbReference>
<dbReference type="PDB" id="9G2S">
    <property type="method" value="EM"/>
    <property type="resolution" value="2.90 A"/>
    <property type="chains" value="B=1-579"/>
</dbReference>
<dbReference type="PDB" id="9G2T">
    <property type="method" value="EM"/>
    <property type="resolution" value="3.15 A"/>
    <property type="chains" value="B=1-579"/>
</dbReference>
<dbReference type="PDB" id="9G2V">
    <property type="method" value="EM"/>
    <property type="resolution" value="3.35 A"/>
    <property type="chains" value="B=1-579"/>
</dbReference>
<dbReference type="PDB" id="9G2X">
    <property type="method" value="EM"/>
    <property type="resolution" value="2.85 A"/>
    <property type="chains" value="B=1-579"/>
</dbReference>
<dbReference type="PDB" id="9G2Y">
    <property type="method" value="EM"/>
    <property type="resolution" value="3.60 A"/>
    <property type="chains" value="B=1-579"/>
</dbReference>
<dbReference type="PDB" id="9G2Z">
    <property type="method" value="EM"/>
    <property type="resolution" value="2.78 A"/>
    <property type="chains" value="B=1-579"/>
</dbReference>
<dbReference type="PDB" id="9G36">
    <property type="method" value="EM"/>
    <property type="resolution" value="3.21 A"/>
    <property type="chains" value="B=1-579"/>
</dbReference>
<dbReference type="PDB" id="9G37">
    <property type="method" value="EM"/>
    <property type="resolution" value="3.00 A"/>
    <property type="chains" value="B=1-579"/>
</dbReference>
<dbReference type="PDB" id="9GL3">
    <property type="method" value="EM"/>
    <property type="resolution" value="3.20 A"/>
    <property type="chains" value="B=1-579"/>
</dbReference>
<dbReference type="PDBsum" id="6TEJ"/>
<dbReference type="PDBsum" id="9FW3"/>
<dbReference type="PDBsum" id="9FXC"/>
<dbReference type="PDBsum" id="9G2K"/>
<dbReference type="PDBsum" id="9G2L"/>
<dbReference type="PDBsum" id="9G2M"/>
<dbReference type="PDBsum" id="9G2P"/>
<dbReference type="PDBsum" id="9G2S"/>
<dbReference type="PDBsum" id="9G2T"/>
<dbReference type="PDBsum" id="9G2V"/>
<dbReference type="PDBsum" id="9G2X"/>
<dbReference type="PDBsum" id="9G2Y"/>
<dbReference type="PDBsum" id="9G2Z"/>
<dbReference type="PDBsum" id="9G36"/>
<dbReference type="PDBsum" id="9G37"/>
<dbReference type="PDBsum" id="9GL3"/>
<dbReference type="EMDB" id="EMD-50820"/>
<dbReference type="EMDB" id="EMD-50848"/>
<dbReference type="EMDB" id="EMD-50977"/>
<dbReference type="EMDB" id="EMD-50978"/>
<dbReference type="EMDB" id="EMD-50979"/>
<dbReference type="EMDB" id="EMD-50980"/>
<dbReference type="EMDB" id="EMD-50982"/>
<dbReference type="EMDB" id="EMD-50983"/>
<dbReference type="EMDB" id="EMD-50985"/>
<dbReference type="EMDB" id="EMD-50987"/>
<dbReference type="EMDB" id="EMD-50988"/>
<dbReference type="EMDB" id="EMD-50989"/>
<dbReference type="EMDB" id="EMD-50992"/>
<dbReference type="EMDB" id="EMD-50993"/>
<dbReference type="EMDB" id="EMD-51435"/>
<dbReference type="SMR" id="G7CBF6"/>
<dbReference type="ABCD" id="G7CBF6">
    <property type="antibodies" value="1 sequenced antibody"/>
</dbReference>
<dbReference type="PATRIC" id="fig|1078020.3.peg.288"/>
<dbReference type="eggNOG" id="COG1132">
    <property type="taxonomic scope" value="Bacteria"/>
</dbReference>
<dbReference type="Proteomes" id="UP000004915">
    <property type="component" value="Unassembled WGS sequence"/>
</dbReference>
<dbReference type="GO" id="GO:0005886">
    <property type="term" value="C:plasma membrane"/>
    <property type="evidence" value="ECO:0007669"/>
    <property type="project" value="UniProtKB-SubCell"/>
</dbReference>
<dbReference type="GO" id="GO:0140359">
    <property type="term" value="F:ABC-type transporter activity"/>
    <property type="evidence" value="ECO:0007669"/>
    <property type="project" value="InterPro"/>
</dbReference>
<dbReference type="GO" id="GO:0005524">
    <property type="term" value="F:ATP binding"/>
    <property type="evidence" value="ECO:0007669"/>
    <property type="project" value="UniProtKB-KW"/>
</dbReference>
<dbReference type="GO" id="GO:0016887">
    <property type="term" value="F:ATP hydrolysis activity"/>
    <property type="evidence" value="ECO:0007669"/>
    <property type="project" value="InterPro"/>
</dbReference>
<dbReference type="GO" id="GO:0034040">
    <property type="term" value="F:ATPase-coupled lipid transmembrane transporter activity"/>
    <property type="evidence" value="ECO:0007669"/>
    <property type="project" value="TreeGrafter"/>
</dbReference>
<dbReference type="FunFam" id="3.40.50.300:FF:000221">
    <property type="entry name" value="Multidrug ABC transporter ATP-binding protein"/>
    <property type="match status" value="1"/>
</dbReference>
<dbReference type="Gene3D" id="1.20.1560.10">
    <property type="entry name" value="ABC transporter type 1, transmembrane domain"/>
    <property type="match status" value="1"/>
</dbReference>
<dbReference type="Gene3D" id="3.40.50.300">
    <property type="entry name" value="P-loop containing nucleotide triphosphate hydrolases"/>
    <property type="match status" value="1"/>
</dbReference>
<dbReference type="InterPro" id="IPR003593">
    <property type="entry name" value="AAA+_ATPase"/>
</dbReference>
<dbReference type="InterPro" id="IPR011527">
    <property type="entry name" value="ABC1_TM_dom"/>
</dbReference>
<dbReference type="InterPro" id="IPR036640">
    <property type="entry name" value="ABC1_TM_sf"/>
</dbReference>
<dbReference type="InterPro" id="IPR003439">
    <property type="entry name" value="ABC_transporter-like_ATP-bd"/>
</dbReference>
<dbReference type="InterPro" id="IPR017871">
    <property type="entry name" value="ABC_transporter-like_CS"/>
</dbReference>
<dbReference type="InterPro" id="IPR027417">
    <property type="entry name" value="P-loop_NTPase"/>
</dbReference>
<dbReference type="InterPro" id="IPR039421">
    <property type="entry name" value="Type_1_exporter"/>
</dbReference>
<dbReference type="PANTHER" id="PTHR24221">
    <property type="entry name" value="ATP-BINDING CASSETTE SUB-FAMILY B"/>
    <property type="match status" value="1"/>
</dbReference>
<dbReference type="PANTHER" id="PTHR24221:SF654">
    <property type="entry name" value="ATP-BINDING CASSETTE SUB-FAMILY B MEMBER 6"/>
    <property type="match status" value="1"/>
</dbReference>
<dbReference type="Pfam" id="PF00005">
    <property type="entry name" value="ABC_tran"/>
    <property type="match status" value="1"/>
</dbReference>
<dbReference type="SMART" id="SM00382">
    <property type="entry name" value="AAA"/>
    <property type="match status" value="1"/>
</dbReference>
<dbReference type="SUPFAM" id="SSF90123">
    <property type="entry name" value="ABC transporter transmembrane region"/>
    <property type="match status" value="1"/>
</dbReference>
<dbReference type="SUPFAM" id="SSF52540">
    <property type="entry name" value="P-loop containing nucleoside triphosphate hydrolases"/>
    <property type="match status" value="1"/>
</dbReference>
<dbReference type="PROSITE" id="PS50929">
    <property type="entry name" value="ABC_TM1F"/>
    <property type="match status" value="1"/>
</dbReference>
<dbReference type="PROSITE" id="PS00211">
    <property type="entry name" value="ABC_TRANSPORTER_1"/>
    <property type="match status" value="1"/>
</dbReference>
<dbReference type="PROSITE" id="PS50893">
    <property type="entry name" value="ABC_TRANSPORTER_2"/>
    <property type="match status" value="1"/>
</dbReference>
<comment type="function">
    <text evidence="3">Part of the ABC transporter complex IrtAB involved in the import of iron-bound mycobactin (Fe-MBT) and carboxymycobactin (Fe-cMBT) (PubMed:32296173). Has a preference for Fe-MBT over Fe-cMBT (PubMed:32296173). Transmembrane domains (TMD) form a pore in the membrane and the ATP-binding domain (NBD) is responsible for energy generation (PubMed:32296173).</text>
</comment>
<comment type="activity regulation">
    <text evidence="3">The ATPase activity of IrtAB is stimulated more than 38-fold in the presence of Fe-MBT, and more than 10-fold in the presence of Fe-cMBT.</text>
</comment>
<comment type="subunit">
    <text evidence="3">Forms a heterodimer with IrtA.</text>
</comment>
<comment type="subcellular location">
    <subcellularLocation>
        <location evidence="3">Cell inner membrane</location>
        <topology evidence="3">Multi-pass membrane protein</topology>
    </subcellularLocation>
</comment>
<comment type="domain">
    <text evidence="3">In IrtB the ATP-binding domain (NBD) and the transmembrane domain (TMD) are fused (PubMed:32296173). The IrtAB transporter assumes an inward-facing conformation, which may represent the low-affinity state after mycobactin release towards the SID and the cytoplasm (PubMed:32296173).</text>
</comment>
<comment type="miscellaneous">
    <text evidence="6">The import function of IrtAB is contradictory to structural predictions, which suggest that it has an ABC exporter fold.</text>
</comment>
<comment type="similarity">
    <text evidence="5">Belongs to the ABC transporter superfamily. Siderophore-Fe(3+) uptake transporter (SIUT) (TC 3.A.1.21) family.</text>
</comment>
<protein>
    <recommendedName>
        <fullName evidence="5">Mycobactin import ATP-binding/permease protein IrtB</fullName>
        <ecNumber evidence="3">7.2.2.-</ecNumber>
    </recommendedName>
</protein>
<feature type="chain" id="PRO_0000450629" description="Mycobactin import ATP-binding/permease protein IrtB">
    <location>
        <begin position="1"/>
        <end position="579"/>
    </location>
</feature>
<feature type="topological domain" description="Cytoplasmic" evidence="6">
    <location>
        <begin position="1"/>
        <end position="25"/>
    </location>
</feature>
<feature type="transmembrane region" description="Helical" evidence="2">
    <location>
        <begin position="26"/>
        <end position="46"/>
    </location>
</feature>
<feature type="topological domain" description="Periplasmic" evidence="6">
    <location>
        <begin position="47"/>
        <end position="48"/>
    </location>
</feature>
<feature type="transmembrane region" description="Helical" evidence="2">
    <location>
        <begin position="49"/>
        <end position="69"/>
    </location>
</feature>
<feature type="topological domain" description="Cytoplasmic" evidence="6">
    <location>
        <begin position="70"/>
        <end position="126"/>
    </location>
</feature>
<feature type="transmembrane region" description="Helical" evidence="2">
    <location>
        <begin position="127"/>
        <end position="147"/>
    </location>
</feature>
<feature type="transmembrane region" description="Helical" evidence="2">
    <location>
        <begin position="148"/>
        <end position="168"/>
    </location>
</feature>
<feature type="topological domain" description="Cytoplasmic" evidence="6">
    <location>
        <begin position="169"/>
        <end position="241"/>
    </location>
</feature>
<feature type="transmembrane region" description="Helical" evidence="2">
    <location>
        <begin position="242"/>
        <end position="262"/>
    </location>
</feature>
<feature type="topological domain" description="Periplasmic" evidence="6">
    <location>
        <begin position="263"/>
        <end position="272"/>
    </location>
</feature>
<feature type="transmembrane region" description="Helical" evidence="2">
    <location>
        <begin position="273"/>
        <end position="293"/>
    </location>
</feature>
<feature type="topological domain" description="Cytoplasmic" evidence="6">
    <location>
        <begin position="294"/>
        <end position="579"/>
    </location>
</feature>
<feature type="domain" description="ABC transmembrane type-1" evidence="2">
    <location>
        <begin position="21"/>
        <end position="299"/>
    </location>
</feature>
<feature type="domain" description="ABC transporter" evidence="1">
    <location>
        <begin position="332"/>
        <end position="565"/>
    </location>
</feature>
<feature type="binding site" evidence="1">
    <location>
        <begin position="364"/>
        <end position="371"/>
    </location>
    <ligand>
        <name>ATP</name>
        <dbReference type="ChEBI" id="CHEBI:30616"/>
    </ligand>
</feature>
<feature type="helix" evidence="9">
    <location>
        <begin position="3"/>
        <end position="7"/>
    </location>
</feature>
<feature type="helix" evidence="9">
    <location>
        <begin position="11"/>
        <end position="13"/>
    </location>
</feature>
<feature type="helix" evidence="9">
    <location>
        <begin position="14"/>
        <end position="36"/>
    </location>
</feature>
<feature type="helix" evidence="9">
    <location>
        <begin position="38"/>
        <end position="45"/>
    </location>
</feature>
<feature type="strand" evidence="10">
    <location>
        <begin position="47"/>
        <end position="49"/>
    </location>
</feature>
<feature type="helix" evidence="9">
    <location>
        <begin position="50"/>
        <end position="52"/>
    </location>
</feature>
<feature type="helix" evidence="9">
    <location>
        <begin position="53"/>
        <end position="96"/>
    </location>
</feature>
<feature type="helix" evidence="9">
    <location>
        <begin position="97"/>
        <end position="99"/>
    </location>
</feature>
<feature type="helix" evidence="9">
    <location>
        <begin position="102"/>
        <end position="104"/>
    </location>
</feature>
<feature type="helix" evidence="9">
    <location>
        <begin position="107"/>
        <end position="118"/>
    </location>
</feature>
<feature type="turn" evidence="11">
    <location>
        <begin position="119"/>
        <end position="121"/>
    </location>
</feature>
<feature type="helix" evidence="9">
    <location>
        <begin position="122"/>
        <end position="125"/>
    </location>
</feature>
<feature type="helix" evidence="9">
    <location>
        <begin position="127"/>
        <end position="130"/>
    </location>
</feature>
<feature type="helix" evidence="9">
    <location>
        <begin position="132"/>
        <end position="148"/>
    </location>
</feature>
<feature type="helix" evidence="9">
    <location>
        <begin position="149"/>
        <end position="151"/>
    </location>
</feature>
<feature type="helix" evidence="9">
    <location>
        <begin position="154"/>
        <end position="176"/>
    </location>
</feature>
<feature type="helix" evidence="9">
    <location>
        <begin position="179"/>
        <end position="201"/>
    </location>
</feature>
<feature type="helix" evidence="9">
    <location>
        <begin position="203"/>
        <end position="208"/>
    </location>
</feature>
<feature type="turn" evidence="8">
    <location>
        <begin position="209"/>
        <end position="212"/>
    </location>
</feature>
<feature type="turn" evidence="9">
    <location>
        <begin position="214"/>
        <end position="216"/>
    </location>
</feature>
<feature type="helix" evidence="9">
    <location>
        <begin position="218"/>
        <end position="236"/>
    </location>
</feature>
<feature type="helix" evidence="9">
    <location>
        <begin position="238"/>
        <end position="264"/>
    </location>
</feature>
<feature type="helix" evidence="9">
    <location>
        <begin position="270"/>
        <end position="311"/>
    </location>
</feature>
<feature type="strand" evidence="9">
    <location>
        <begin position="325"/>
        <end position="327"/>
    </location>
</feature>
<feature type="strand" evidence="9">
    <location>
        <begin position="332"/>
        <end position="341"/>
    </location>
</feature>
<feature type="strand" evidence="9">
    <location>
        <begin position="344"/>
        <end position="354"/>
    </location>
</feature>
<feature type="strand" evidence="9">
    <location>
        <begin position="359"/>
        <end position="363"/>
    </location>
</feature>
<feature type="strand" evidence="12">
    <location>
        <begin position="365"/>
        <end position="367"/>
    </location>
</feature>
<feature type="helix" evidence="9">
    <location>
        <begin position="370"/>
        <end position="377"/>
    </location>
</feature>
<feature type="strand" evidence="9">
    <location>
        <begin position="384"/>
        <end position="390"/>
    </location>
</feature>
<feature type="helix" evidence="9">
    <location>
        <begin position="395"/>
        <end position="397"/>
    </location>
</feature>
<feature type="helix" evidence="9">
    <location>
        <begin position="400"/>
        <end position="404"/>
    </location>
</feature>
<feature type="strand" evidence="9">
    <location>
        <begin position="407"/>
        <end position="410"/>
    </location>
</feature>
<feature type="strand" evidence="9">
    <location>
        <begin position="418"/>
        <end position="420"/>
    </location>
</feature>
<feature type="helix" evidence="9">
    <location>
        <begin position="421"/>
        <end position="425"/>
    </location>
</feature>
<feature type="helix" evidence="9">
    <location>
        <begin position="434"/>
        <end position="443"/>
    </location>
</feature>
<feature type="turn" evidence="10">
    <location>
        <begin position="444"/>
        <end position="446"/>
    </location>
</feature>
<feature type="helix" evidence="9">
    <location>
        <begin position="447"/>
        <end position="452"/>
    </location>
</feature>
<feature type="strand" evidence="9">
    <location>
        <begin position="453"/>
        <end position="455"/>
    </location>
</feature>
<feature type="helix" evidence="9">
    <location>
        <begin position="456"/>
        <end position="458"/>
    </location>
</feature>
<feature type="turn" evidence="9">
    <location>
        <begin position="464"/>
        <end position="467"/>
    </location>
</feature>
<feature type="helix" evidence="9">
    <location>
        <begin position="470"/>
        <end position="483"/>
    </location>
</feature>
<feature type="strand" evidence="9">
    <location>
        <begin position="487"/>
        <end position="493"/>
    </location>
</feature>
<feature type="turn" evidence="9">
    <location>
        <begin position="494"/>
        <end position="497"/>
    </location>
</feature>
<feature type="helix" evidence="9">
    <location>
        <begin position="500"/>
        <end position="511"/>
    </location>
</feature>
<feature type="strand" evidence="9">
    <location>
        <begin position="518"/>
        <end position="522"/>
    </location>
</feature>
<feature type="helix" evidence="9">
    <location>
        <begin position="526"/>
        <end position="529"/>
    </location>
</feature>
<feature type="strand" evidence="9">
    <location>
        <begin position="533"/>
        <end position="539"/>
    </location>
</feature>
<feature type="strand" evidence="9">
    <location>
        <begin position="542"/>
        <end position="547"/>
    </location>
</feature>
<feature type="helix" evidence="9">
    <location>
        <begin position="549"/>
        <end position="555"/>
    </location>
</feature>
<feature type="helix" evidence="9">
    <location>
        <begin position="558"/>
        <end position="562"/>
    </location>
</feature>